<protein>
    <recommendedName>
        <fullName evidence="1">Isoleucine--tRNA ligase</fullName>
        <ecNumber evidence="1">6.1.1.5</ecNumber>
    </recommendedName>
    <alternativeName>
        <fullName evidence="1">Isoleucyl-tRNA synthetase</fullName>
        <shortName evidence="1">IleRS</shortName>
    </alternativeName>
</protein>
<organism>
    <name type="scientific">Nitratidesulfovibrio vulgaris (strain DP4)</name>
    <name type="common">Desulfovibrio vulgaris</name>
    <dbReference type="NCBI Taxonomy" id="391774"/>
    <lineage>
        <taxon>Bacteria</taxon>
        <taxon>Pseudomonadati</taxon>
        <taxon>Thermodesulfobacteriota</taxon>
        <taxon>Desulfovibrionia</taxon>
        <taxon>Desulfovibrionales</taxon>
        <taxon>Desulfovibrionaceae</taxon>
        <taxon>Nitratidesulfovibrio</taxon>
    </lineage>
</organism>
<dbReference type="EC" id="6.1.1.5" evidence="1"/>
<dbReference type="EMBL" id="CP000527">
    <property type="protein sequence ID" value="ABM28259.1"/>
    <property type="molecule type" value="Genomic_DNA"/>
</dbReference>
<dbReference type="RefSeq" id="WP_011792149.1">
    <property type="nucleotide sequence ID" value="NC_008751.1"/>
</dbReference>
<dbReference type="SMR" id="A1VCU3"/>
<dbReference type="KEGG" id="dvl:Dvul_1240"/>
<dbReference type="HOGENOM" id="CLU_001493_7_1_7"/>
<dbReference type="Proteomes" id="UP000009173">
    <property type="component" value="Chromosome"/>
</dbReference>
<dbReference type="GO" id="GO:0005829">
    <property type="term" value="C:cytosol"/>
    <property type="evidence" value="ECO:0007669"/>
    <property type="project" value="TreeGrafter"/>
</dbReference>
<dbReference type="GO" id="GO:0002161">
    <property type="term" value="F:aminoacyl-tRNA deacylase activity"/>
    <property type="evidence" value="ECO:0007669"/>
    <property type="project" value="InterPro"/>
</dbReference>
<dbReference type="GO" id="GO:0005524">
    <property type="term" value="F:ATP binding"/>
    <property type="evidence" value="ECO:0007669"/>
    <property type="project" value="UniProtKB-UniRule"/>
</dbReference>
<dbReference type="GO" id="GO:0004822">
    <property type="term" value="F:isoleucine-tRNA ligase activity"/>
    <property type="evidence" value="ECO:0007669"/>
    <property type="project" value="UniProtKB-UniRule"/>
</dbReference>
<dbReference type="GO" id="GO:0000049">
    <property type="term" value="F:tRNA binding"/>
    <property type="evidence" value="ECO:0007669"/>
    <property type="project" value="InterPro"/>
</dbReference>
<dbReference type="GO" id="GO:0008270">
    <property type="term" value="F:zinc ion binding"/>
    <property type="evidence" value="ECO:0007669"/>
    <property type="project" value="UniProtKB-UniRule"/>
</dbReference>
<dbReference type="GO" id="GO:0006428">
    <property type="term" value="P:isoleucyl-tRNA aminoacylation"/>
    <property type="evidence" value="ECO:0007669"/>
    <property type="project" value="UniProtKB-UniRule"/>
</dbReference>
<dbReference type="CDD" id="cd07960">
    <property type="entry name" value="Anticodon_Ia_Ile_BEm"/>
    <property type="match status" value="1"/>
</dbReference>
<dbReference type="CDD" id="cd00818">
    <property type="entry name" value="IleRS_core"/>
    <property type="match status" value="1"/>
</dbReference>
<dbReference type="FunFam" id="1.10.730.20:FF:000001">
    <property type="entry name" value="Isoleucine--tRNA ligase"/>
    <property type="match status" value="1"/>
</dbReference>
<dbReference type="Gene3D" id="1.10.730.20">
    <property type="match status" value="1"/>
</dbReference>
<dbReference type="Gene3D" id="3.40.50.620">
    <property type="entry name" value="HUPs"/>
    <property type="match status" value="2"/>
</dbReference>
<dbReference type="Gene3D" id="1.10.10.830">
    <property type="entry name" value="Ile-tRNA synthetase CP2 domain-like"/>
    <property type="match status" value="1"/>
</dbReference>
<dbReference type="Gene3D" id="3.90.740.10">
    <property type="entry name" value="Valyl/Leucyl/Isoleucyl-tRNA synthetase, editing domain"/>
    <property type="match status" value="1"/>
</dbReference>
<dbReference type="HAMAP" id="MF_02002">
    <property type="entry name" value="Ile_tRNA_synth_type1"/>
    <property type="match status" value="1"/>
</dbReference>
<dbReference type="InterPro" id="IPR001412">
    <property type="entry name" value="aa-tRNA-synth_I_CS"/>
</dbReference>
<dbReference type="InterPro" id="IPR002300">
    <property type="entry name" value="aa-tRNA-synth_Ia"/>
</dbReference>
<dbReference type="InterPro" id="IPR033708">
    <property type="entry name" value="Anticodon_Ile_BEm"/>
</dbReference>
<dbReference type="InterPro" id="IPR002301">
    <property type="entry name" value="Ile-tRNA-ligase"/>
</dbReference>
<dbReference type="InterPro" id="IPR023585">
    <property type="entry name" value="Ile-tRNA-ligase_type1"/>
</dbReference>
<dbReference type="InterPro" id="IPR050081">
    <property type="entry name" value="Ile-tRNA_ligase"/>
</dbReference>
<dbReference type="InterPro" id="IPR013155">
    <property type="entry name" value="M/V/L/I-tRNA-synth_anticd-bd"/>
</dbReference>
<dbReference type="InterPro" id="IPR014729">
    <property type="entry name" value="Rossmann-like_a/b/a_fold"/>
</dbReference>
<dbReference type="InterPro" id="IPR009080">
    <property type="entry name" value="tRNAsynth_Ia_anticodon-bd"/>
</dbReference>
<dbReference type="InterPro" id="IPR009008">
    <property type="entry name" value="Val/Leu/Ile-tRNA-synth_edit"/>
</dbReference>
<dbReference type="InterPro" id="IPR010663">
    <property type="entry name" value="Znf_FPG/IleRS"/>
</dbReference>
<dbReference type="NCBIfam" id="TIGR00392">
    <property type="entry name" value="ileS"/>
    <property type="match status" value="1"/>
</dbReference>
<dbReference type="PANTHER" id="PTHR42765:SF1">
    <property type="entry name" value="ISOLEUCINE--TRNA LIGASE, MITOCHONDRIAL"/>
    <property type="match status" value="1"/>
</dbReference>
<dbReference type="PANTHER" id="PTHR42765">
    <property type="entry name" value="SOLEUCYL-TRNA SYNTHETASE"/>
    <property type="match status" value="1"/>
</dbReference>
<dbReference type="Pfam" id="PF08264">
    <property type="entry name" value="Anticodon_1"/>
    <property type="match status" value="1"/>
</dbReference>
<dbReference type="Pfam" id="PF00133">
    <property type="entry name" value="tRNA-synt_1"/>
    <property type="match status" value="1"/>
</dbReference>
<dbReference type="Pfam" id="PF06827">
    <property type="entry name" value="zf-FPG_IleRS"/>
    <property type="match status" value="1"/>
</dbReference>
<dbReference type="PRINTS" id="PR00984">
    <property type="entry name" value="TRNASYNTHILE"/>
</dbReference>
<dbReference type="SUPFAM" id="SSF47323">
    <property type="entry name" value="Anticodon-binding domain of a subclass of class I aminoacyl-tRNA synthetases"/>
    <property type="match status" value="1"/>
</dbReference>
<dbReference type="SUPFAM" id="SSF52374">
    <property type="entry name" value="Nucleotidylyl transferase"/>
    <property type="match status" value="1"/>
</dbReference>
<dbReference type="SUPFAM" id="SSF50677">
    <property type="entry name" value="ValRS/IleRS/LeuRS editing domain"/>
    <property type="match status" value="1"/>
</dbReference>
<dbReference type="PROSITE" id="PS00178">
    <property type="entry name" value="AA_TRNA_LIGASE_I"/>
    <property type="match status" value="1"/>
</dbReference>
<evidence type="ECO:0000255" key="1">
    <source>
        <dbReference type="HAMAP-Rule" id="MF_02002"/>
    </source>
</evidence>
<name>SYI_NITV4</name>
<gene>
    <name evidence="1" type="primary">ileS</name>
    <name type="ordered locus">Dvul_1240</name>
</gene>
<reference key="1">
    <citation type="journal article" date="2009" name="Environ. Microbiol.">
        <title>Contribution of mobile genetic elements to Desulfovibrio vulgaris genome plasticity.</title>
        <authorList>
            <person name="Walker C.B."/>
            <person name="Stolyar S."/>
            <person name="Chivian D."/>
            <person name="Pinel N."/>
            <person name="Gabster J.A."/>
            <person name="Dehal P.S."/>
            <person name="He Z."/>
            <person name="Yang Z.K."/>
            <person name="Yen H.C."/>
            <person name="Zhou J."/>
            <person name="Wall J.D."/>
            <person name="Hazen T.C."/>
            <person name="Arkin A.P."/>
            <person name="Stahl D.A."/>
        </authorList>
    </citation>
    <scope>NUCLEOTIDE SEQUENCE [LARGE SCALE GENOMIC DNA]</scope>
    <source>
        <strain>DP4</strain>
    </source>
</reference>
<accession>A1VCU3</accession>
<sequence length="938" mass="105975">MSDYKKTLQLPETKFPMKANLTQREPEMLRKWEKDDAYGAMVRASGQQGTYVLHDGPPYANGNIHMGHALNKILKDIIVKSRNLQGFKAEYVPGWDCHGLPIELKVEHELGEKKRTMPAHAVRKRCRQYAEKYLDIQRKEFKRLGVFGAWDKPYVTMHPSYEAATARELGNFAAKGGLVRSKKPIYWCCSCQTALAEAEVEYHDHTSPSVHVRFPLRDPRVAEVLPGVDPAHAYIVIWTTTPWTLPDNMAVAVHPDFDYVVVRHGGDFHIVAEGLLEACLKAFKWDEHEVVARIGGRALEGLKATHPFYDRPSPIVLADYVTLESGTGCVHTAPGHGREDYETGLRYGLDIYSPLTDEGRYLDCVEFFAGMTIFEANPKVIEKLREVGNLLAEGRITHSYPHCWRCKKPVIFRATTQWFIAMERNDLRQKALDAIRDDVRWIPSWGQERIHNMIEFRPDWCISRQRMWGVPIVALLCEDCGEAWNDADWMRDIAERFAKHATGCDYWYETDLSDIVPAGLRCPKCGGDHWKKETDILDVWFDSGTSFAAVVEQREECGFPADLYLEGSDQHRGWFHSSLLASIGTRGVPPYRSVLTHGYVVDGDGRKMSKSVGNVVAPQEIIDKHGAEVLRLWVASVDYREDIRISEEILNRLVDAYRRIRNTCRYLLGNISDLTPETMVPFEAMDPLDRFALDLASRAHERIQDAYTEYEFHKVFHTLHNLCVTDLSAFYLDILKDRLYSSAADSHARRSAQTALYRILMLMVRDMAPVLSFTAEEVFGYVPAALRPDVISVFALPATDAPAFTLDTTSRAAWEKLLAVRSETTKAIEPLRKSGEVGHSLDTHVTLFADPSLKATLEGLGSDLRAMFIVSRLEVMNLADAPADAWTSEELPELRVAVRKAEGEKCERCWIISADLGTDAAHPTLCPRCTAVLTGTGA</sequence>
<feature type="chain" id="PRO_1000070886" description="Isoleucine--tRNA ligase">
    <location>
        <begin position="1"/>
        <end position="938"/>
    </location>
</feature>
<feature type="short sequence motif" description="'HIGH' region">
    <location>
        <begin position="58"/>
        <end position="68"/>
    </location>
</feature>
<feature type="short sequence motif" description="'KMSKS' region">
    <location>
        <begin position="607"/>
        <end position="611"/>
    </location>
</feature>
<feature type="binding site" evidence="1">
    <location>
        <position position="566"/>
    </location>
    <ligand>
        <name>L-isoleucyl-5'-AMP</name>
        <dbReference type="ChEBI" id="CHEBI:178002"/>
    </ligand>
</feature>
<feature type="binding site" evidence="1">
    <location>
        <position position="610"/>
    </location>
    <ligand>
        <name>ATP</name>
        <dbReference type="ChEBI" id="CHEBI:30616"/>
    </ligand>
</feature>
<feature type="binding site" evidence="1">
    <location>
        <position position="906"/>
    </location>
    <ligand>
        <name>Zn(2+)</name>
        <dbReference type="ChEBI" id="CHEBI:29105"/>
    </ligand>
</feature>
<feature type="binding site" evidence="1">
    <location>
        <position position="909"/>
    </location>
    <ligand>
        <name>Zn(2+)</name>
        <dbReference type="ChEBI" id="CHEBI:29105"/>
    </ligand>
</feature>
<feature type="binding site" evidence="1">
    <location>
        <position position="926"/>
    </location>
    <ligand>
        <name>Zn(2+)</name>
        <dbReference type="ChEBI" id="CHEBI:29105"/>
    </ligand>
</feature>
<feature type="binding site" evidence="1">
    <location>
        <position position="929"/>
    </location>
    <ligand>
        <name>Zn(2+)</name>
        <dbReference type="ChEBI" id="CHEBI:29105"/>
    </ligand>
</feature>
<proteinExistence type="inferred from homology"/>
<comment type="function">
    <text evidence="1">Catalyzes the attachment of isoleucine to tRNA(Ile). As IleRS can inadvertently accommodate and process structurally similar amino acids such as valine, to avoid such errors it has two additional distinct tRNA(Ile)-dependent editing activities. One activity is designated as 'pretransfer' editing and involves the hydrolysis of activated Val-AMP. The other activity is designated 'posttransfer' editing and involves deacylation of mischarged Val-tRNA(Ile).</text>
</comment>
<comment type="catalytic activity">
    <reaction evidence="1">
        <text>tRNA(Ile) + L-isoleucine + ATP = L-isoleucyl-tRNA(Ile) + AMP + diphosphate</text>
        <dbReference type="Rhea" id="RHEA:11060"/>
        <dbReference type="Rhea" id="RHEA-COMP:9666"/>
        <dbReference type="Rhea" id="RHEA-COMP:9695"/>
        <dbReference type="ChEBI" id="CHEBI:30616"/>
        <dbReference type="ChEBI" id="CHEBI:33019"/>
        <dbReference type="ChEBI" id="CHEBI:58045"/>
        <dbReference type="ChEBI" id="CHEBI:78442"/>
        <dbReference type="ChEBI" id="CHEBI:78528"/>
        <dbReference type="ChEBI" id="CHEBI:456215"/>
        <dbReference type="EC" id="6.1.1.5"/>
    </reaction>
</comment>
<comment type="cofactor">
    <cofactor evidence="1">
        <name>Zn(2+)</name>
        <dbReference type="ChEBI" id="CHEBI:29105"/>
    </cofactor>
    <text evidence="1">Binds 1 zinc ion per subunit.</text>
</comment>
<comment type="subunit">
    <text evidence="1">Monomer.</text>
</comment>
<comment type="subcellular location">
    <subcellularLocation>
        <location evidence="1">Cytoplasm</location>
    </subcellularLocation>
</comment>
<comment type="domain">
    <text evidence="1">IleRS has two distinct active sites: one for aminoacylation and one for editing. The misactivated valine is translocated from the active site to the editing site, which sterically excludes the correctly activated isoleucine. The single editing site contains two valyl binding pockets, one specific for each substrate (Val-AMP or Val-tRNA(Ile)).</text>
</comment>
<comment type="similarity">
    <text evidence="1">Belongs to the class-I aminoacyl-tRNA synthetase family. IleS type 1 subfamily.</text>
</comment>
<keyword id="KW-0030">Aminoacyl-tRNA synthetase</keyword>
<keyword id="KW-0067">ATP-binding</keyword>
<keyword id="KW-0963">Cytoplasm</keyword>
<keyword id="KW-0436">Ligase</keyword>
<keyword id="KW-0479">Metal-binding</keyword>
<keyword id="KW-0547">Nucleotide-binding</keyword>
<keyword id="KW-0648">Protein biosynthesis</keyword>
<keyword id="KW-0862">Zinc</keyword>